<name>HSLU_THEPX</name>
<feature type="chain" id="PRO_1000204532" description="ATP-dependent protease ATPase subunit HslU">
    <location>
        <begin position="1"/>
        <end position="459"/>
    </location>
</feature>
<feature type="binding site" evidence="1">
    <location>
        <position position="18"/>
    </location>
    <ligand>
        <name>ATP</name>
        <dbReference type="ChEBI" id="CHEBI:30616"/>
    </ligand>
</feature>
<feature type="binding site" evidence="1">
    <location>
        <begin position="60"/>
        <end position="65"/>
    </location>
    <ligand>
        <name>ATP</name>
        <dbReference type="ChEBI" id="CHEBI:30616"/>
    </ligand>
</feature>
<feature type="binding site" evidence="1">
    <location>
        <position position="272"/>
    </location>
    <ligand>
        <name>ATP</name>
        <dbReference type="ChEBI" id="CHEBI:30616"/>
    </ligand>
</feature>
<feature type="binding site" evidence="1">
    <location>
        <position position="337"/>
    </location>
    <ligand>
        <name>ATP</name>
        <dbReference type="ChEBI" id="CHEBI:30616"/>
    </ligand>
</feature>
<feature type="binding site" evidence="1">
    <location>
        <position position="409"/>
    </location>
    <ligand>
        <name>ATP</name>
        <dbReference type="ChEBI" id="CHEBI:30616"/>
    </ligand>
</feature>
<comment type="function">
    <text evidence="1">ATPase subunit of a proteasome-like degradation complex; this subunit has chaperone activity. The binding of ATP and its subsequent hydrolysis by HslU are essential for unfolding of protein substrates subsequently hydrolyzed by HslV. HslU recognizes the N-terminal part of its protein substrates and unfolds these before they are guided to HslV for hydrolysis.</text>
</comment>
<comment type="subunit">
    <text evidence="1">A double ring-shaped homohexamer of HslV is capped on each side by a ring-shaped HslU homohexamer. The assembly of the HslU/HslV complex is dependent on binding of ATP.</text>
</comment>
<comment type="subcellular location">
    <subcellularLocation>
        <location evidence="1">Cytoplasm</location>
    </subcellularLocation>
</comment>
<comment type="similarity">
    <text evidence="1">Belongs to the ClpX chaperone family. HslU subfamily.</text>
</comment>
<organism>
    <name type="scientific">Thermoanaerobacter sp. (strain X514)</name>
    <dbReference type="NCBI Taxonomy" id="399726"/>
    <lineage>
        <taxon>Bacteria</taxon>
        <taxon>Bacillati</taxon>
        <taxon>Bacillota</taxon>
        <taxon>Clostridia</taxon>
        <taxon>Thermoanaerobacterales</taxon>
        <taxon>Thermoanaerobacteraceae</taxon>
        <taxon>Thermoanaerobacter</taxon>
    </lineage>
</organism>
<sequence length="459" mass="52618">MKNYTPKEIVEELDKYIVGQKEAKKSVAVALRNRYRRNLLSDDFKEEVTPKNIIMVGPTGVGKTEIARRIAKLVEAPFVKVEATKFTEVGYVGRDVDSMVRDLVEAAVRMVKEEKLKKVTEKAKKIAEDRLIDYIVGKRKKQAKNPFEMLFNYPAAEKSEETEEESMQYKREEIRQKLRNGELDNYVVEIEVTDTSTPMMEMYTNLGSEEMNINLQDIFADILPKKKKIKKVPVYEAKRILESEEAQNLIDMDEVIEEAIKRAENDGIIFIDEIDKIASSGYTAGPDVSREGVQRDILPIIEGCTVMTKYGPVKTDHILFIAAGAFNIAKVSDLIPELQGRFPVRVSLKPLTKEDFIRILKEPKNALTKQYQELLRTEGIEVKYTDEAIEAIAEVAYLINQQSEDIGARRLHTVMEKLFEELSFNAPDLKGQQIVITEEYVKEQLKDSLNKYEVNKYIL</sequence>
<accession>B0K1T6</accession>
<proteinExistence type="inferred from homology"/>
<reference key="1">
    <citation type="submission" date="2008-01" db="EMBL/GenBank/DDBJ databases">
        <title>Complete sequence of Thermoanaerobacter sp. X514.</title>
        <authorList>
            <consortium name="US DOE Joint Genome Institute"/>
            <person name="Copeland A."/>
            <person name="Lucas S."/>
            <person name="Lapidus A."/>
            <person name="Barry K."/>
            <person name="Glavina del Rio T."/>
            <person name="Dalin E."/>
            <person name="Tice H."/>
            <person name="Pitluck S."/>
            <person name="Bruce D."/>
            <person name="Goodwin L."/>
            <person name="Saunders E."/>
            <person name="Brettin T."/>
            <person name="Detter J.C."/>
            <person name="Han C."/>
            <person name="Schmutz J."/>
            <person name="Larimer F."/>
            <person name="Land M."/>
            <person name="Hauser L."/>
            <person name="Kyrpides N."/>
            <person name="Kim E."/>
            <person name="Hemme C."/>
            <person name="Fields M.W."/>
            <person name="He Z."/>
            <person name="Zhou J."/>
            <person name="Richardson P."/>
        </authorList>
    </citation>
    <scope>NUCLEOTIDE SEQUENCE [LARGE SCALE GENOMIC DNA]</scope>
    <source>
        <strain>X514</strain>
    </source>
</reference>
<dbReference type="EMBL" id="CP000923">
    <property type="protein sequence ID" value="ABY92984.1"/>
    <property type="molecule type" value="Genomic_DNA"/>
</dbReference>
<dbReference type="RefSeq" id="WP_009052419.1">
    <property type="nucleotide sequence ID" value="NC_010320.1"/>
</dbReference>
<dbReference type="SMR" id="B0K1T6"/>
<dbReference type="KEGG" id="tex:Teth514_1698"/>
<dbReference type="HOGENOM" id="CLU_033123_0_0_9"/>
<dbReference type="Proteomes" id="UP000002155">
    <property type="component" value="Chromosome"/>
</dbReference>
<dbReference type="GO" id="GO:0009376">
    <property type="term" value="C:HslUV protease complex"/>
    <property type="evidence" value="ECO:0007669"/>
    <property type="project" value="UniProtKB-UniRule"/>
</dbReference>
<dbReference type="GO" id="GO:0005524">
    <property type="term" value="F:ATP binding"/>
    <property type="evidence" value="ECO:0007669"/>
    <property type="project" value="UniProtKB-UniRule"/>
</dbReference>
<dbReference type="GO" id="GO:0016887">
    <property type="term" value="F:ATP hydrolysis activity"/>
    <property type="evidence" value="ECO:0007669"/>
    <property type="project" value="InterPro"/>
</dbReference>
<dbReference type="GO" id="GO:0008233">
    <property type="term" value="F:peptidase activity"/>
    <property type="evidence" value="ECO:0007669"/>
    <property type="project" value="InterPro"/>
</dbReference>
<dbReference type="GO" id="GO:0036402">
    <property type="term" value="F:proteasome-activating activity"/>
    <property type="evidence" value="ECO:0007669"/>
    <property type="project" value="UniProtKB-UniRule"/>
</dbReference>
<dbReference type="GO" id="GO:0043335">
    <property type="term" value="P:protein unfolding"/>
    <property type="evidence" value="ECO:0007669"/>
    <property type="project" value="UniProtKB-UniRule"/>
</dbReference>
<dbReference type="GO" id="GO:0051603">
    <property type="term" value="P:proteolysis involved in protein catabolic process"/>
    <property type="evidence" value="ECO:0007669"/>
    <property type="project" value="TreeGrafter"/>
</dbReference>
<dbReference type="CDD" id="cd19498">
    <property type="entry name" value="RecA-like_HslU"/>
    <property type="match status" value="1"/>
</dbReference>
<dbReference type="FunFam" id="3.40.50.300:FF:000213">
    <property type="entry name" value="ATP-dependent protease ATPase subunit HslU"/>
    <property type="match status" value="1"/>
</dbReference>
<dbReference type="FunFam" id="3.40.50.300:FF:000220">
    <property type="entry name" value="ATP-dependent protease ATPase subunit HslU"/>
    <property type="match status" value="1"/>
</dbReference>
<dbReference type="Gene3D" id="1.10.8.60">
    <property type="match status" value="1"/>
</dbReference>
<dbReference type="Gene3D" id="3.40.50.300">
    <property type="entry name" value="P-loop containing nucleotide triphosphate hydrolases"/>
    <property type="match status" value="2"/>
</dbReference>
<dbReference type="HAMAP" id="MF_00249">
    <property type="entry name" value="HslU"/>
    <property type="match status" value="1"/>
</dbReference>
<dbReference type="InterPro" id="IPR003593">
    <property type="entry name" value="AAA+_ATPase"/>
</dbReference>
<dbReference type="InterPro" id="IPR050052">
    <property type="entry name" value="ATP-dep_Clp_protease_ClpX"/>
</dbReference>
<dbReference type="InterPro" id="IPR003959">
    <property type="entry name" value="ATPase_AAA_core"/>
</dbReference>
<dbReference type="InterPro" id="IPR019489">
    <property type="entry name" value="Clp_ATPase_C"/>
</dbReference>
<dbReference type="InterPro" id="IPR004491">
    <property type="entry name" value="HslU"/>
</dbReference>
<dbReference type="InterPro" id="IPR027417">
    <property type="entry name" value="P-loop_NTPase"/>
</dbReference>
<dbReference type="NCBIfam" id="TIGR00390">
    <property type="entry name" value="hslU"/>
    <property type="match status" value="1"/>
</dbReference>
<dbReference type="NCBIfam" id="NF003544">
    <property type="entry name" value="PRK05201.1"/>
    <property type="match status" value="1"/>
</dbReference>
<dbReference type="PANTHER" id="PTHR48102">
    <property type="entry name" value="ATP-DEPENDENT CLP PROTEASE ATP-BINDING SUBUNIT CLPX-LIKE, MITOCHONDRIAL-RELATED"/>
    <property type="match status" value="1"/>
</dbReference>
<dbReference type="PANTHER" id="PTHR48102:SF3">
    <property type="entry name" value="ATP-DEPENDENT PROTEASE ATPASE SUBUNIT HSLU"/>
    <property type="match status" value="1"/>
</dbReference>
<dbReference type="Pfam" id="PF00004">
    <property type="entry name" value="AAA"/>
    <property type="match status" value="1"/>
</dbReference>
<dbReference type="Pfam" id="PF07724">
    <property type="entry name" value="AAA_2"/>
    <property type="match status" value="1"/>
</dbReference>
<dbReference type="Pfam" id="PF10431">
    <property type="entry name" value="ClpB_D2-small"/>
    <property type="match status" value="1"/>
</dbReference>
<dbReference type="SMART" id="SM00382">
    <property type="entry name" value="AAA"/>
    <property type="match status" value="1"/>
</dbReference>
<dbReference type="SMART" id="SM01086">
    <property type="entry name" value="ClpB_D2-small"/>
    <property type="match status" value="1"/>
</dbReference>
<dbReference type="SUPFAM" id="SSF52540">
    <property type="entry name" value="P-loop containing nucleoside triphosphate hydrolases"/>
    <property type="match status" value="1"/>
</dbReference>
<gene>
    <name evidence="1" type="primary">hslU</name>
    <name type="ordered locus">Teth514_1698</name>
</gene>
<protein>
    <recommendedName>
        <fullName evidence="1">ATP-dependent protease ATPase subunit HslU</fullName>
    </recommendedName>
    <alternativeName>
        <fullName evidence="1">Unfoldase HslU</fullName>
    </alternativeName>
</protein>
<keyword id="KW-0067">ATP-binding</keyword>
<keyword id="KW-0143">Chaperone</keyword>
<keyword id="KW-0963">Cytoplasm</keyword>
<keyword id="KW-0547">Nucleotide-binding</keyword>
<keyword id="KW-0346">Stress response</keyword>
<evidence type="ECO:0000255" key="1">
    <source>
        <dbReference type="HAMAP-Rule" id="MF_00249"/>
    </source>
</evidence>